<reference key="1">
    <citation type="submission" date="2005-08" db="EMBL/GenBank/DDBJ databases">
        <title>Complete sequence of chromosome 1 of Nitrosospira multiformis ATCC 25196.</title>
        <authorList>
            <person name="Copeland A."/>
            <person name="Lucas S."/>
            <person name="Lapidus A."/>
            <person name="Barry K."/>
            <person name="Detter J.C."/>
            <person name="Glavina T."/>
            <person name="Hammon N."/>
            <person name="Israni S."/>
            <person name="Pitluck S."/>
            <person name="Chain P."/>
            <person name="Malfatti S."/>
            <person name="Shin M."/>
            <person name="Vergez L."/>
            <person name="Schmutz J."/>
            <person name="Larimer F."/>
            <person name="Land M."/>
            <person name="Hauser L."/>
            <person name="Kyrpides N."/>
            <person name="Lykidis A."/>
            <person name="Richardson P."/>
        </authorList>
    </citation>
    <scope>NUCLEOTIDE SEQUENCE [LARGE SCALE GENOMIC DNA]</scope>
    <source>
        <strain>ATCC 25196 / NCIMB 11849 / C 71</strain>
    </source>
</reference>
<protein>
    <recommendedName>
        <fullName evidence="1">Urease subunit alpha</fullName>
        <ecNumber evidence="1">3.5.1.5</ecNumber>
    </recommendedName>
    <alternativeName>
        <fullName evidence="1">Urea amidohydrolase subunit alpha</fullName>
    </alternativeName>
</protein>
<gene>
    <name evidence="1" type="primary">ureC</name>
    <name type="ordered locus">Nmul_A1241</name>
</gene>
<accession>Q2Y9M7</accession>
<dbReference type="EC" id="3.5.1.5" evidence="1"/>
<dbReference type="EMBL" id="CP000103">
    <property type="protein sequence ID" value="ABB74544.1"/>
    <property type="molecule type" value="Genomic_DNA"/>
</dbReference>
<dbReference type="RefSeq" id="WP_011380585.1">
    <property type="nucleotide sequence ID" value="NC_007614.1"/>
</dbReference>
<dbReference type="SMR" id="Q2Y9M7"/>
<dbReference type="STRING" id="323848.Nmul_A1241"/>
<dbReference type="KEGG" id="nmu:Nmul_A1241"/>
<dbReference type="eggNOG" id="COG0804">
    <property type="taxonomic scope" value="Bacteria"/>
</dbReference>
<dbReference type="HOGENOM" id="CLU_000980_0_0_4"/>
<dbReference type="OrthoDB" id="9802793at2"/>
<dbReference type="UniPathway" id="UPA00258">
    <property type="reaction ID" value="UER00370"/>
</dbReference>
<dbReference type="Proteomes" id="UP000002718">
    <property type="component" value="Chromosome"/>
</dbReference>
<dbReference type="GO" id="GO:0005737">
    <property type="term" value="C:cytoplasm"/>
    <property type="evidence" value="ECO:0007669"/>
    <property type="project" value="UniProtKB-SubCell"/>
</dbReference>
<dbReference type="GO" id="GO:0016151">
    <property type="term" value="F:nickel cation binding"/>
    <property type="evidence" value="ECO:0007669"/>
    <property type="project" value="UniProtKB-UniRule"/>
</dbReference>
<dbReference type="GO" id="GO:0009039">
    <property type="term" value="F:urease activity"/>
    <property type="evidence" value="ECO:0007669"/>
    <property type="project" value="UniProtKB-UniRule"/>
</dbReference>
<dbReference type="GO" id="GO:0043419">
    <property type="term" value="P:urea catabolic process"/>
    <property type="evidence" value="ECO:0007669"/>
    <property type="project" value="UniProtKB-UniRule"/>
</dbReference>
<dbReference type="CDD" id="cd00375">
    <property type="entry name" value="Urease_alpha"/>
    <property type="match status" value="1"/>
</dbReference>
<dbReference type="Gene3D" id="3.20.20.140">
    <property type="entry name" value="Metal-dependent hydrolases"/>
    <property type="match status" value="1"/>
</dbReference>
<dbReference type="Gene3D" id="2.30.40.10">
    <property type="entry name" value="Urease, subunit C, domain 1"/>
    <property type="match status" value="1"/>
</dbReference>
<dbReference type="HAMAP" id="MF_01953">
    <property type="entry name" value="Urease_alpha"/>
    <property type="match status" value="1"/>
</dbReference>
<dbReference type="InterPro" id="IPR006680">
    <property type="entry name" value="Amidohydro-rel"/>
</dbReference>
<dbReference type="InterPro" id="IPR011059">
    <property type="entry name" value="Metal-dep_hydrolase_composite"/>
</dbReference>
<dbReference type="InterPro" id="IPR032466">
    <property type="entry name" value="Metal_Hydrolase"/>
</dbReference>
<dbReference type="InterPro" id="IPR011612">
    <property type="entry name" value="Urease_alpha_N_dom"/>
</dbReference>
<dbReference type="InterPro" id="IPR050112">
    <property type="entry name" value="Urease_alpha_subunit"/>
</dbReference>
<dbReference type="InterPro" id="IPR017950">
    <property type="entry name" value="Urease_AS"/>
</dbReference>
<dbReference type="InterPro" id="IPR005848">
    <property type="entry name" value="Urease_asu"/>
</dbReference>
<dbReference type="InterPro" id="IPR017951">
    <property type="entry name" value="Urease_asu_c"/>
</dbReference>
<dbReference type="InterPro" id="IPR029754">
    <property type="entry name" value="Urease_Ni-bd"/>
</dbReference>
<dbReference type="NCBIfam" id="NF009686">
    <property type="entry name" value="PRK13207.1"/>
    <property type="match status" value="1"/>
</dbReference>
<dbReference type="NCBIfam" id="TIGR01792">
    <property type="entry name" value="urease_alph"/>
    <property type="match status" value="1"/>
</dbReference>
<dbReference type="PANTHER" id="PTHR43440">
    <property type="entry name" value="UREASE"/>
    <property type="match status" value="1"/>
</dbReference>
<dbReference type="PANTHER" id="PTHR43440:SF1">
    <property type="entry name" value="UREASE"/>
    <property type="match status" value="1"/>
</dbReference>
<dbReference type="Pfam" id="PF01979">
    <property type="entry name" value="Amidohydro_1"/>
    <property type="match status" value="1"/>
</dbReference>
<dbReference type="Pfam" id="PF00449">
    <property type="entry name" value="Urease_alpha"/>
    <property type="match status" value="1"/>
</dbReference>
<dbReference type="PRINTS" id="PR01752">
    <property type="entry name" value="UREASE"/>
</dbReference>
<dbReference type="SUPFAM" id="SSF51338">
    <property type="entry name" value="Composite domain of metallo-dependent hydrolases"/>
    <property type="match status" value="2"/>
</dbReference>
<dbReference type="SUPFAM" id="SSF51556">
    <property type="entry name" value="Metallo-dependent hydrolases"/>
    <property type="match status" value="1"/>
</dbReference>
<dbReference type="PROSITE" id="PS01120">
    <property type="entry name" value="UREASE_1"/>
    <property type="match status" value="1"/>
</dbReference>
<dbReference type="PROSITE" id="PS00145">
    <property type="entry name" value="UREASE_2"/>
    <property type="match status" value="1"/>
</dbReference>
<dbReference type="PROSITE" id="PS51368">
    <property type="entry name" value="UREASE_3"/>
    <property type="match status" value="1"/>
</dbReference>
<name>URE1_NITMU</name>
<keyword id="KW-0963">Cytoplasm</keyword>
<keyword id="KW-0378">Hydrolase</keyword>
<keyword id="KW-0479">Metal-binding</keyword>
<keyword id="KW-0533">Nickel</keyword>
<keyword id="KW-1185">Reference proteome</keyword>
<proteinExistence type="inferred from homology"/>
<organism>
    <name type="scientific">Nitrosospira multiformis (strain ATCC 25196 / NCIMB 11849 / C 71)</name>
    <dbReference type="NCBI Taxonomy" id="323848"/>
    <lineage>
        <taxon>Bacteria</taxon>
        <taxon>Pseudomonadati</taxon>
        <taxon>Pseudomonadota</taxon>
        <taxon>Betaproteobacteria</taxon>
        <taxon>Nitrosomonadales</taxon>
        <taxon>Nitrosomonadaceae</taxon>
        <taxon>Nitrosospira</taxon>
    </lineage>
</organism>
<sequence length="568" mass="61515">MSFKVSRQTYAELMGPTTGDRIRLADTELMIEIEKDFTTYGEEVKFGGGKVIRDGMGQSQHNHDQVMDTVITNAVIIDHWGIVKADVGLKNGRIAEIGKAGNPDIQPNVTMSIGAATEIIAGENMILTAGGIDSHIHFISPQQAEDAMMNGITTMLGGGTGPAAGTAATTCTPGPWHIHSMLRASDGMVMNTGFYGKGNVSLPTPLEEQILAGACGLKLHEDWGSTYAAIDNCLAVADKYDVQVAVHTDTINEGGYLENTIAAMKDRTIHTFHTEGAGGGHAPDIIAVVGQENVLPSSTNPTRPYTINTLDEHLDMLMVCHHLHANIPEDLAFAESRIRKETIAAEDILQDMGAISMMSSDSQAMGRIGEVVLRTWQTAHKMKIQRGTLQEDTSKNDNFRVKRYIAKYTINPAITHGISHALGSVEVGKYADLVLWRPAFFGVKPSVILKGGMIAASLMGDPNASIPTPQPVHYRYMFGGYGGGIKTSCFTFVSQAALAAGLVDQLKLDKNLIEVKNTRNLRKKDMIHNSATPKMEVDPETYEVRADGQLLTCGAEDVLPMAQRYFLF</sequence>
<feature type="chain" id="PRO_0000239878" description="Urease subunit alpha">
    <location>
        <begin position="1"/>
        <end position="568"/>
    </location>
</feature>
<feature type="domain" description="Urease" evidence="1">
    <location>
        <begin position="130"/>
        <end position="568"/>
    </location>
</feature>
<feature type="active site" description="Proton donor" evidence="1">
    <location>
        <position position="321"/>
    </location>
</feature>
<feature type="binding site" evidence="1">
    <location>
        <position position="135"/>
    </location>
    <ligand>
        <name>Ni(2+)</name>
        <dbReference type="ChEBI" id="CHEBI:49786"/>
        <label>1</label>
    </ligand>
</feature>
<feature type="binding site" evidence="1">
    <location>
        <position position="137"/>
    </location>
    <ligand>
        <name>Ni(2+)</name>
        <dbReference type="ChEBI" id="CHEBI:49786"/>
        <label>1</label>
    </ligand>
</feature>
<feature type="binding site" description="via carbamate group" evidence="1">
    <location>
        <position position="218"/>
    </location>
    <ligand>
        <name>Ni(2+)</name>
        <dbReference type="ChEBI" id="CHEBI:49786"/>
        <label>1</label>
    </ligand>
</feature>
<feature type="binding site" description="via carbamate group" evidence="1">
    <location>
        <position position="218"/>
    </location>
    <ligand>
        <name>Ni(2+)</name>
        <dbReference type="ChEBI" id="CHEBI:49786"/>
        <label>2</label>
    </ligand>
</feature>
<feature type="binding site" evidence="1">
    <location>
        <position position="220"/>
    </location>
    <ligand>
        <name>substrate</name>
    </ligand>
</feature>
<feature type="binding site" evidence="1">
    <location>
        <position position="247"/>
    </location>
    <ligand>
        <name>Ni(2+)</name>
        <dbReference type="ChEBI" id="CHEBI:49786"/>
        <label>2</label>
    </ligand>
</feature>
<feature type="binding site" evidence="1">
    <location>
        <position position="273"/>
    </location>
    <ligand>
        <name>Ni(2+)</name>
        <dbReference type="ChEBI" id="CHEBI:49786"/>
        <label>2</label>
    </ligand>
</feature>
<feature type="binding site" evidence="1">
    <location>
        <position position="361"/>
    </location>
    <ligand>
        <name>Ni(2+)</name>
        <dbReference type="ChEBI" id="CHEBI:49786"/>
        <label>1</label>
    </ligand>
</feature>
<feature type="modified residue" description="N6-carboxylysine" evidence="1">
    <location>
        <position position="218"/>
    </location>
</feature>
<evidence type="ECO:0000255" key="1">
    <source>
        <dbReference type="HAMAP-Rule" id="MF_01953"/>
    </source>
</evidence>
<comment type="catalytic activity">
    <reaction evidence="1">
        <text>urea + 2 H2O + H(+) = hydrogencarbonate + 2 NH4(+)</text>
        <dbReference type="Rhea" id="RHEA:20557"/>
        <dbReference type="ChEBI" id="CHEBI:15377"/>
        <dbReference type="ChEBI" id="CHEBI:15378"/>
        <dbReference type="ChEBI" id="CHEBI:16199"/>
        <dbReference type="ChEBI" id="CHEBI:17544"/>
        <dbReference type="ChEBI" id="CHEBI:28938"/>
        <dbReference type="EC" id="3.5.1.5"/>
    </reaction>
</comment>
<comment type="cofactor">
    <cofactor evidence="1">
        <name>Ni cation</name>
        <dbReference type="ChEBI" id="CHEBI:25516"/>
    </cofactor>
    <text evidence="1">Binds 2 nickel ions per subunit.</text>
</comment>
<comment type="pathway">
    <text evidence="1">Nitrogen metabolism; urea degradation; CO(2) and NH(3) from urea (urease route): step 1/1.</text>
</comment>
<comment type="subunit">
    <text evidence="1">Heterotrimer of UreA (gamma), UreB (beta) and UreC (alpha) subunits. Three heterotrimers associate to form the active enzyme.</text>
</comment>
<comment type="subcellular location">
    <subcellularLocation>
        <location evidence="1">Cytoplasm</location>
    </subcellularLocation>
</comment>
<comment type="PTM">
    <text evidence="1">Carboxylation allows a single lysine to coordinate two nickel ions.</text>
</comment>
<comment type="similarity">
    <text evidence="1">Belongs to the metallo-dependent hydrolases superfamily. Urease alpha subunit family.</text>
</comment>